<name>ISPF_PORGI</name>
<proteinExistence type="inferred from homology"/>
<accession>Q7MXX0</accession>
<feature type="chain" id="PRO_0000189493" description="2-C-methyl-D-erythritol 2,4-cyclodiphosphate synthase">
    <location>
        <begin position="1"/>
        <end position="162"/>
    </location>
</feature>
<feature type="binding site" evidence="1">
    <location>
        <begin position="12"/>
        <end position="14"/>
    </location>
    <ligand>
        <name>4-CDP-2-C-methyl-D-erythritol 2-phosphate</name>
        <dbReference type="ChEBI" id="CHEBI:57919"/>
    </ligand>
</feature>
<feature type="binding site" evidence="1">
    <location>
        <position position="12"/>
    </location>
    <ligand>
        <name>a divalent metal cation</name>
        <dbReference type="ChEBI" id="CHEBI:60240"/>
    </ligand>
</feature>
<feature type="binding site" evidence="1">
    <location>
        <position position="14"/>
    </location>
    <ligand>
        <name>a divalent metal cation</name>
        <dbReference type="ChEBI" id="CHEBI:60240"/>
    </ligand>
</feature>
<feature type="binding site" evidence="1">
    <location>
        <begin position="38"/>
        <end position="39"/>
    </location>
    <ligand>
        <name>4-CDP-2-C-methyl-D-erythritol 2-phosphate</name>
        <dbReference type="ChEBI" id="CHEBI:57919"/>
    </ligand>
</feature>
<feature type="binding site" evidence="1">
    <location>
        <position position="46"/>
    </location>
    <ligand>
        <name>a divalent metal cation</name>
        <dbReference type="ChEBI" id="CHEBI:60240"/>
    </ligand>
</feature>
<feature type="binding site" evidence="1">
    <location>
        <begin position="60"/>
        <end position="62"/>
    </location>
    <ligand>
        <name>4-CDP-2-C-methyl-D-erythritol 2-phosphate</name>
        <dbReference type="ChEBI" id="CHEBI:57919"/>
    </ligand>
</feature>
<feature type="binding site" evidence="1">
    <location>
        <begin position="136"/>
        <end position="139"/>
    </location>
    <ligand>
        <name>4-CDP-2-C-methyl-D-erythritol 2-phosphate</name>
        <dbReference type="ChEBI" id="CHEBI:57919"/>
    </ligand>
</feature>
<feature type="binding site" evidence="1">
    <location>
        <position position="143"/>
    </location>
    <ligand>
        <name>4-CDP-2-C-methyl-D-erythritol 2-phosphate</name>
        <dbReference type="ChEBI" id="CHEBI:57919"/>
    </ligand>
</feature>
<feature type="binding site" evidence="1">
    <location>
        <position position="146"/>
    </location>
    <ligand>
        <name>4-CDP-2-C-methyl-D-erythritol 2-phosphate</name>
        <dbReference type="ChEBI" id="CHEBI:57919"/>
    </ligand>
</feature>
<feature type="site" description="Transition state stabilizer" evidence="1">
    <location>
        <position position="38"/>
    </location>
</feature>
<feature type="site" description="Transition state stabilizer" evidence="1">
    <location>
        <position position="137"/>
    </location>
</feature>
<sequence>MKKPFRIGFGFDVHRLSEGYPLWMGGVRLEHSKGLEGHSDADVLIHAICDALLGAAALRDIGYHFPPSDPQYKGIDSKILLARVMELVRSQGYELGNIDATIAAEQPKLNPHIPDMQRVLAEVIQVEVSDISLKATTTEKLGFTGREEGISAYAVALLIAAV</sequence>
<evidence type="ECO:0000255" key="1">
    <source>
        <dbReference type="HAMAP-Rule" id="MF_00107"/>
    </source>
</evidence>
<comment type="function">
    <text evidence="1">Involved in the biosynthesis of isopentenyl diphosphate (IPP) and dimethylallyl diphosphate (DMAPP), two major building blocks of isoprenoid compounds. Catalyzes the conversion of 4-diphosphocytidyl-2-C-methyl-D-erythritol 2-phosphate (CDP-ME2P) to 2-C-methyl-D-erythritol 2,4-cyclodiphosphate (ME-CPP) with a corresponding release of cytidine 5-monophosphate (CMP).</text>
</comment>
<comment type="catalytic activity">
    <reaction evidence="1">
        <text>4-CDP-2-C-methyl-D-erythritol 2-phosphate = 2-C-methyl-D-erythritol 2,4-cyclic diphosphate + CMP</text>
        <dbReference type="Rhea" id="RHEA:23864"/>
        <dbReference type="ChEBI" id="CHEBI:57919"/>
        <dbReference type="ChEBI" id="CHEBI:58483"/>
        <dbReference type="ChEBI" id="CHEBI:60377"/>
        <dbReference type="EC" id="4.6.1.12"/>
    </reaction>
</comment>
<comment type="cofactor">
    <cofactor evidence="1">
        <name>a divalent metal cation</name>
        <dbReference type="ChEBI" id="CHEBI:60240"/>
    </cofactor>
    <text evidence="1">Binds 1 divalent metal cation per subunit.</text>
</comment>
<comment type="pathway">
    <text evidence="1">Isoprenoid biosynthesis; isopentenyl diphosphate biosynthesis via DXP pathway; isopentenyl diphosphate from 1-deoxy-D-xylulose 5-phosphate: step 4/6.</text>
</comment>
<comment type="subunit">
    <text evidence="1">Homotrimer.</text>
</comment>
<comment type="similarity">
    <text evidence="1">Belongs to the IspF family.</text>
</comment>
<dbReference type="EC" id="4.6.1.12" evidence="1"/>
<dbReference type="EMBL" id="AE015924">
    <property type="protein sequence ID" value="AAQ65283.1"/>
    <property type="molecule type" value="Genomic_DNA"/>
</dbReference>
<dbReference type="RefSeq" id="WP_004583426.1">
    <property type="nucleotide sequence ID" value="NC_002950.2"/>
</dbReference>
<dbReference type="SMR" id="Q7MXX0"/>
<dbReference type="STRING" id="242619.PG_0028"/>
<dbReference type="EnsemblBacteria" id="AAQ65283">
    <property type="protein sequence ID" value="AAQ65283"/>
    <property type="gene ID" value="PG_0028"/>
</dbReference>
<dbReference type="KEGG" id="pgi:PG_0028"/>
<dbReference type="eggNOG" id="COG0245">
    <property type="taxonomic scope" value="Bacteria"/>
</dbReference>
<dbReference type="HOGENOM" id="CLU_084630_2_0_10"/>
<dbReference type="UniPathway" id="UPA00056">
    <property type="reaction ID" value="UER00095"/>
</dbReference>
<dbReference type="Proteomes" id="UP000000588">
    <property type="component" value="Chromosome"/>
</dbReference>
<dbReference type="GO" id="GO:0008685">
    <property type="term" value="F:2-C-methyl-D-erythritol 2,4-cyclodiphosphate synthase activity"/>
    <property type="evidence" value="ECO:0007669"/>
    <property type="project" value="UniProtKB-UniRule"/>
</dbReference>
<dbReference type="GO" id="GO:0046872">
    <property type="term" value="F:metal ion binding"/>
    <property type="evidence" value="ECO:0007669"/>
    <property type="project" value="UniProtKB-KW"/>
</dbReference>
<dbReference type="GO" id="GO:0019288">
    <property type="term" value="P:isopentenyl diphosphate biosynthetic process, methylerythritol 4-phosphate pathway"/>
    <property type="evidence" value="ECO:0007669"/>
    <property type="project" value="UniProtKB-UniRule"/>
</dbReference>
<dbReference type="GO" id="GO:0016114">
    <property type="term" value="P:terpenoid biosynthetic process"/>
    <property type="evidence" value="ECO:0007669"/>
    <property type="project" value="InterPro"/>
</dbReference>
<dbReference type="CDD" id="cd00554">
    <property type="entry name" value="MECDP_synthase"/>
    <property type="match status" value="1"/>
</dbReference>
<dbReference type="FunFam" id="3.30.1330.50:FF:000001">
    <property type="entry name" value="2-C-methyl-D-erythritol 2,4-cyclodiphosphate synthase"/>
    <property type="match status" value="1"/>
</dbReference>
<dbReference type="Gene3D" id="3.30.1330.50">
    <property type="entry name" value="2-C-methyl-D-erythritol 2,4-cyclodiphosphate synthase"/>
    <property type="match status" value="1"/>
</dbReference>
<dbReference type="HAMAP" id="MF_00107">
    <property type="entry name" value="IspF"/>
    <property type="match status" value="1"/>
</dbReference>
<dbReference type="InterPro" id="IPR003526">
    <property type="entry name" value="MECDP_synthase"/>
</dbReference>
<dbReference type="InterPro" id="IPR020555">
    <property type="entry name" value="MECDP_synthase_CS"/>
</dbReference>
<dbReference type="InterPro" id="IPR036571">
    <property type="entry name" value="MECDP_synthase_sf"/>
</dbReference>
<dbReference type="NCBIfam" id="TIGR00151">
    <property type="entry name" value="ispF"/>
    <property type="match status" value="1"/>
</dbReference>
<dbReference type="PANTHER" id="PTHR43181">
    <property type="entry name" value="2-C-METHYL-D-ERYTHRITOL 2,4-CYCLODIPHOSPHATE SYNTHASE, CHLOROPLASTIC"/>
    <property type="match status" value="1"/>
</dbReference>
<dbReference type="PANTHER" id="PTHR43181:SF1">
    <property type="entry name" value="2-C-METHYL-D-ERYTHRITOL 2,4-CYCLODIPHOSPHATE SYNTHASE, CHLOROPLASTIC"/>
    <property type="match status" value="1"/>
</dbReference>
<dbReference type="Pfam" id="PF02542">
    <property type="entry name" value="YgbB"/>
    <property type="match status" value="1"/>
</dbReference>
<dbReference type="SUPFAM" id="SSF69765">
    <property type="entry name" value="IpsF-like"/>
    <property type="match status" value="1"/>
</dbReference>
<dbReference type="PROSITE" id="PS01350">
    <property type="entry name" value="ISPF"/>
    <property type="match status" value="1"/>
</dbReference>
<keyword id="KW-0414">Isoprene biosynthesis</keyword>
<keyword id="KW-0456">Lyase</keyword>
<keyword id="KW-0479">Metal-binding</keyword>
<keyword id="KW-1185">Reference proteome</keyword>
<reference key="1">
    <citation type="journal article" date="2003" name="J. Bacteriol.">
        <title>Complete genome sequence of the oral pathogenic bacterium Porphyromonas gingivalis strain W83.</title>
        <authorList>
            <person name="Nelson K.E."/>
            <person name="Fleischmann R.D."/>
            <person name="DeBoy R.T."/>
            <person name="Paulsen I.T."/>
            <person name="Fouts D.E."/>
            <person name="Eisen J.A."/>
            <person name="Daugherty S.C."/>
            <person name="Dodson R.J."/>
            <person name="Durkin A.S."/>
            <person name="Gwinn M.L."/>
            <person name="Haft D.H."/>
            <person name="Kolonay J.F."/>
            <person name="Nelson W.C."/>
            <person name="Mason T.M."/>
            <person name="Tallon L."/>
            <person name="Gray J."/>
            <person name="Granger D."/>
            <person name="Tettelin H."/>
            <person name="Dong H."/>
            <person name="Galvin J.L."/>
            <person name="Duncan M.J."/>
            <person name="Dewhirst F.E."/>
            <person name="Fraser C.M."/>
        </authorList>
    </citation>
    <scope>NUCLEOTIDE SEQUENCE [LARGE SCALE GENOMIC DNA]</scope>
    <source>
        <strain>ATCC BAA-308 / W83</strain>
    </source>
</reference>
<gene>
    <name evidence="1" type="primary">ispF</name>
    <name type="ordered locus">PG_0028</name>
</gene>
<protein>
    <recommendedName>
        <fullName evidence="1">2-C-methyl-D-erythritol 2,4-cyclodiphosphate synthase</fullName>
        <shortName evidence="1">MECDP-synthase</shortName>
        <shortName evidence="1">MECPP-synthase</shortName>
        <shortName evidence="1">MECPS</shortName>
        <ecNumber evidence="1">4.6.1.12</ecNumber>
    </recommendedName>
</protein>
<organism>
    <name type="scientific">Porphyromonas gingivalis (strain ATCC BAA-308 / W83)</name>
    <dbReference type="NCBI Taxonomy" id="242619"/>
    <lineage>
        <taxon>Bacteria</taxon>
        <taxon>Pseudomonadati</taxon>
        <taxon>Bacteroidota</taxon>
        <taxon>Bacteroidia</taxon>
        <taxon>Bacteroidales</taxon>
        <taxon>Porphyromonadaceae</taxon>
        <taxon>Porphyromonas</taxon>
    </lineage>
</organism>